<sequence>MSQSLFCDEVLPHISDIQVYQPGKPISEVQREHNLLRISKLASNENPLGASPKAIKAVQSELINMGRYPDGNSFYLKQDLADFLQKQPTEIALGNGSNELLELVARIFAGKGDEIIYSQYAFAVYSISTQAVGATGIEVPAKEWGHDLEAMAEAITDKTKLIYLANPNNPTGTLFTQKEWEAFISKVPSNVIVVLDEAYTEYVTHDEYANGLNYLEQYPNLIVSRTFSKAYGLAALRIGYMVANEELIAYINRLRAPFNINHLAQVAAKAALKDPMFVKKTVDLNTQGMQTLTQFFEEKGLSYIPSQGNFVCVDLGPDSLKINQALLKEGVIVRPVAPEGKFSEFLRISIGLPNENQHFMAALNKILTSSNFK</sequence>
<protein>
    <recommendedName>
        <fullName evidence="1">Histidinol-phosphate aminotransferase 2</fullName>
        <ecNumber evidence="1">2.6.1.9</ecNumber>
    </recommendedName>
    <alternativeName>
        <fullName evidence="1">Imidazole acetol-phosphate transaminase 2</fullName>
    </alternativeName>
</protein>
<reference key="1">
    <citation type="journal article" date="2006" name="PLoS Biol.">
        <title>The genome of deep-sea vent chemolithoautotroph Thiomicrospira crunogena XCL-2.</title>
        <authorList>
            <person name="Scott K.M."/>
            <person name="Sievert S.M."/>
            <person name="Abril F.N."/>
            <person name="Ball L.A."/>
            <person name="Barrett C.J."/>
            <person name="Blake R.A."/>
            <person name="Boller A.J."/>
            <person name="Chain P.S.G."/>
            <person name="Clark J.A."/>
            <person name="Davis C.R."/>
            <person name="Detter C."/>
            <person name="Do K.F."/>
            <person name="Dobrinski K.P."/>
            <person name="Faza B.I."/>
            <person name="Fitzpatrick K.A."/>
            <person name="Freyermuth S.K."/>
            <person name="Harmer T.L."/>
            <person name="Hauser L.J."/>
            <person name="Huegler M."/>
            <person name="Kerfeld C.A."/>
            <person name="Klotz M.G."/>
            <person name="Kong W.W."/>
            <person name="Land M."/>
            <person name="Lapidus A."/>
            <person name="Larimer F.W."/>
            <person name="Longo D.L."/>
            <person name="Lucas S."/>
            <person name="Malfatti S.A."/>
            <person name="Massey S.E."/>
            <person name="Martin D.D."/>
            <person name="McCuddin Z."/>
            <person name="Meyer F."/>
            <person name="Moore J.L."/>
            <person name="Ocampo L.H. Jr."/>
            <person name="Paul J.H."/>
            <person name="Paulsen I.T."/>
            <person name="Reep D.K."/>
            <person name="Ren Q."/>
            <person name="Ross R.L."/>
            <person name="Sato P.Y."/>
            <person name="Thomas P."/>
            <person name="Tinkham L.E."/>
            <person name="Zeruth G.T."/>
        </authorList>
    </citation>
    <scope>NUCLEOTIDE SEQUENCE [LARGE SCALE GENOMIC DNA]</scope>
    <source>
        <strain>DSM 25203 / XCL-2</strain>
    </source>
</reference>
<accession>Q31GD4</accession>
<feature type="chain" id="PRO_0000230226" description="Histidinol-phosphate aminotransferase 2">
    <location>
        <begin position="1"/>
        <end position="373"/>
    </location>
</feature>
<feature type="modified residue" description="N6-(pyridoxal phosphate)lysine" evidence="1">
    <location>
        <position position="229"/>
    </location>
</feature>
<organism>
    <name type="scientific">Hydrogenovibrio crunogenus (strain DSM 25203 / XCL-2)</name>
    <name type="common">Thiomicrospira crunogena</name>
    <dbReference type="NCBI Taxonomy" id="317025"/>
    <lineage>
        <taxon>Bacteria</taxon>
        <taxon>Pseudomonadati</taxon>
        <taxon>Pseudomonadota</taxon>
        <taxon>Gammaproteobacteria</taxon>
        <taxon>Thiotrichales</taxon>
        <taxon>Piscirickettsiaceae</taxon>
        <taxon>Hydrogenovibrio</taxon>
    </lineage>
</organism>
<comment type="catalytic activity">
    <reaction evidence="1">
        <text>L-histidinol phosphate + 2-oxoglutarate = 3-(imidazol-4-yl)-2-oxopropyl phosphate + L-glutamate</text>
        <dbReference type="Rhea" id="RHEA:23744"/>
        <dbReference type="ChEBI" id="CHEBI:16810"/>
        <dbReference type="ChEBI" id="CHEBI:29985"/>
        <dbReference type="ChEBI" id="CHEBI:57766"/>
        <dbReference type="ChEBI" id="CHEBI:57980"/>
        <dbReference type="EC" id="2.6.1.9"/>
    </reaction>
</comment>
<comment type="cofactor">
    <cofactor evidence="1">
        <name>pyridoxal 5'-phosphate</name>
        <dbReference type="ChEBI" id="CHEBI:597326"/>
    </cofactor>
</comment>
<comment type="pathway">
    <text evidence="1">Amino-acid biosynthesis; L-histidine biosynthesis; L-histidine from 5-phospho-alpha-D-ribose 1-diphosphate: step 7/9.</text>
</comment>
<comment type="subunit">
    <text evidence="1">Homodimer.</text>
</comment>
<comment type="similarity">
    <text evidence="1">Belongs to the class-II pyridoxal-phosphate-dependent aminotransferase family. Histidinol-phosphate aminotransferase subfamily.</text>
</comment>
<gene>
    <name evidence="1" type="primary">hisC2</name>
    <name type="ordered locus">Tcr_1194</name>
</gene>
<keyword id="KW-0028">Amino-acid biosynthesis</keyword>
<keyword id="KW-0032">Aminotransferase</keyword>
<keyword id="KW-0368">Histidine biosynthesis</keyword>
<keyword id="KW-0663">Pyridoxal phosphate</keyword>
<keyword id="KW-0808">Transferase</keyword>
<name>HIS82_HYDCU</name>
<dbReference type="EC" id="2.6.1.9" evidence="1"/>
<dbReference type="EMBL" id="CP000109">
    <property type="protein sequence ID" value="ABB41789.1"/>
    <property type="molecule type" value="Genomic_DNA"/>
</dbReference>
<dbReference type="SMR" id="Q31GD4"/>
<dbReference type="STRING" id="317025.Tcr_1194"/>
<dbReference type="KEGG" id="tcx:Tcr_1194"/>
<dbReference type="eggNOG" id="COG0079">
    <property type="taxonomic scope" value="Bacteria"/>
</dbReference>
<dbReference type="HOGENOM" id="CLU_017584_3_3_6"/>
<dbReference type="OrthoDB" id="9813612at2"/>
<dbReference type="UniPathway" id="UPA00031">
    <property type="reaction ID" value="UER00012"/>
</dbReference>
<dbReference type="GO" id="GO:0004400">
    <property type="term" value="F:histidinol-phosphate transaminase activity"/>
    <property type="evidence" value="ECO:0007669"/>
    <property type="project" value="UniProtKB-UniRule"/>
</dbReference>
<dbReference type="GO" id="GO:0030170">
    <property type="term" value="F:pyridoxal phosphate binding"/>
    <property type="evidence" value="ECO:0007669"/>
    <property type="project" value="InterPro"/>
</dbReference>
<dbReference type="GO" id="GO:0000105">
    <property type="term" value="P:L-histidine biosynthetic process"/>
    <property type="evidence" value="ECO:0007669"/>
    <property type="project" value="UniProtKB-UniRule"/>
</dbReference>
<dbReference type="CDD" id="cd00609">
    <property type="entry name" value="AAT_like"/>
    <property type="match status" value="1"/>
</dbReference>
<dbReference type="Gene3D" id="3.90.1150.10">
    <property type="entry name" value="Aspartate Aminotransferase, domain 1"/>
    <property type="match status" value="1"/>
</dbReference>
<dbReference type="Gene3D" id="3.40.640.10">
    <property type="entry name" value="Type I PLP-dependent aspartate aminotransferase-like (Major domain)"/>
    <property type="match status" value="1"/>
</dbReference>
<dbReference type="HAMAP" id="MF_01023">
    <property type="entry name" value="HisC_aminotrans_2"/>
    <property type="match status" value="1"/>
</dbReference>
<dbReference type="InterPro" id="IPR001917">
    <property type="entry name" value="Aminotrans_II_pyridoxalP_BS"/>
</dbReference>
<dbReference type="InterPro" id="IPR004839">
    <property type="entry name" value="Aminotransferase_I/II_large"/>
</dbReference>
<dbReference type="InterPro" id="IPR005861">
    <property type="entry name" value="HisP_aminotrans"/>
</dbReference>
<dbReference type="InterPro" id="IPR050106">
    <property type="entry name" value="HistidinolP_aminotransfase"/>
</dbReference>
<dbReference type="InterPro" id="IPR015424">
    <property type="entry name" value="PyrdxlP-dep_Trfase"/>
</dbReference>
<dbReference type="InterPro" id="IPR015421">
    <property type="entry name" value="PyrdxlP-dep_Trfase_major"/>
</dbReference>
<dbReference type="InterPro" id="IPR015422">
    <property type="entry name" value="PyrdxlP-dep_Trfase_small"/>
</dbReference>
<dbReference type="NCBIfam" id="TIGR01141">
    <property type="entry name" value="hisC"/>
    <property type="match status" value="1"/>
</dbReference>
<dbReference type="PANTHER" id="PTHR43643:SF3">
    <property type="entry name" value="HISTIDINOL-PHOSPHATE AMINOTRANSFERASE"/>
    <property type="match status" value="1"/>
</dbReference>
<dbReference type="PANTHER" id="PTHR43643">
    <property type="entry name" value="HISTIDINOL-PHOSPHATE AMINOTRANSFERASE 2"/>
    <property type="match status" value="1"/>
</dbReference>
<dbReference type="Pfam" id="PF00155">
    <property type="entry name" value="Aminotran_1_2"/>
    <property type="match status" value="1"/>
</dbReference>
<dbReference type="SUPFAM" id="SSF53383">
    <property type="entry name" value="PLP-dependent transferases"/>
    <property type="match status" value="1"/>
</dbReference>
<dbReference type="PROSITE" id="PS00599">
    <property type="entry name" value="AA_TRANSFER_CLASS_2"/>
    <property type="match status" value="1"/>
</dbReference>
<evidence type="ECO:0000255" key="1">
    <source>
        <dbReference type="HAMAP-Rule" id="MF_01023"/>
    </source>
</evidence>
<proteinExistence type="inferred from homology"/>